<feature type="chain" id="PRO_0000118910" description="Transcription initiation factor TFIID subunit 13">
    <location>
        <begin position="1"/>
        <end position="124"/>
    </location>
</feature>
<feature type="domain" description="Histone-fold" evidence="1">
    <location>
        <begin position="31"/>
        <end position="74"/>
    </location>
</feature>
<feature type="region of interest" description="Disordered" evidence="2">
    <location>
        <begin position="1"/>
        <end position="28"/>
    </location>
</feature>
<feature type="compositionally biased region" description="Acidic residues" evidence="2">
    <location>
        <begin position="1"/>
        <end position="16"/>
    </location>
</feature>
<feature type="sequence variant" id="VAR_079046" description="In MRT60; impairs interaction with TAF11; dbSNP:rs1060505030." evidence="3">
    <original>L</original>
    <variation>H</variation>
    <location>
        <position position="31"/>
    </location>
</feature>
<feature type="sequence variant" id="VAR_079047" description="In MRT60; impairs interaction with TAF11; dbSNP:rs1060505029." evidence="3">
    <original>M</original>
    <variation>K</variation>
    <location>
        <position position="40"/>
    </location>
</feature>
<feature type="helix" evidence="20">
    <location>
        <begin position="33"/>
        <end position="42"/>
    </location>
</feature>
<feature type="helix" evidence="20">
    <location>
        <begin position="51"/>
        <end position="74"/>
    </location>
</feature>
<feature type="strand" evidence="21">
    <location>
        <begin position="75"/>
        <end position="77"/>
    </location>
</feature>
<feature type="helix" evidence="21">
    <location>
        <begin position="83"/>
        <end position="90"/>
    </location>
</feature>
<feature type="helix" evidence="21">
    <location>
        <begin position="94"/>
        <end position="113"/>
    </location>
</feature>
<keyword id="KW-0002">3D-structure</keyword>
<keyword id="KW-0225">Disease variant</keyword>
<keyword id="KW-0991">Intellectual disability</keyword>
<keyword id="KW-0539">Nucleus</keyword>
<keyword id="KW-1267">Proteomics identification</keyword>
<keyword id="KW-1185">Reference proteome</keyword>
<keyword id="KW-0804">Transcription</keyword>
<keyword id="KW-0805">Transcription regulation</keyword>
<gene>
    <name evidence="9" type="primary">TAF13</name>
    <name evidence="9" type="synonym">TAF2K</name>
    <name evidence="6" type="synonym">TAFII18</name>
</gene>
<dbReference type="EMBL" id="X84003">
    <property type="protein sequence ID" value="CAA58827.1"/>
    <property type="molecule type" value="mRNA"/>
</dbReference>
<dbReference type="EMBL" id="AK312158">
    <property type="protein sequence ID" value="BAG35092.1"/>
    <property type="molecule type" value="mRNA"/>
</dbReference>
<dbReference type="EMBL" id="BX679664">
    <property type="status" value="NOT_ANNOTATED_CDS"/>
    <property type="molecule type" value="Genomic_DNA"/>
</dbReference>
<dbReference type="EMBL" id="CH471122">
    <property type="protein sequence ID" value="EAW56354.1"/>
    <property type="molecule type" value="Genomic_DNA"/>
</dbReference>
<dbReference type="EMBL" id="BC121180">
    <property type="protein sequence ID" value="AAI21181.1"/>
    <property type="molecule type" value="mRNA"/>
</dbReference>
<dbReference type="CCDS" id="CCDS30788.1"/>
<dbReference type="PIR" id="S54782">
    <property type="entry name" value="S54782"/>
</dbReference>
<dbReference type="RefSeq" id="NP_005636.1">
    <property type="nucleotide sequence ID" value="NM_005645.4"/>
</dbReference>
<dbReference type="PDB" id="1BH8">
    <property type="method" value="X-ray"/>
    <property type="resolution" value="3.00 A"/>
    <property type="chains" value="A=31-75"/>
</dbReference>
<dbReference type="PDB" id="1BH9">
    <property type="method" value="X-ray"/>
    <property type="resolution" value="2.60 A"/>
    <property type="chains" value="A=31-75"/>
</dbReference>
<dbReference type="PDB" id="6MZD">
    <property type="method" value="EM"/>
    <property type="resolution" value="9.80 A"/>
    <property type="chains" value="S=1-124"/>
</dbReference>
<dbReference type="PDB" id="6MZL">
    <property type="method" value="EM"/>
    <property type="resolution" value="23.00 A"/>
    <property type="chains" value="S=1-124"/>
</dbReference>
<dbReference type="PDB" id="7EDX">
    <property type="method" value="EM"/>
    <property type="resolution" value="4.50 A"/>
    <property type="chains" value="m=1-124"/>
</dbReference>
<dbReference type="PDB" id="7EG7">
    <property type="method" value="EM"/>
    <property type="resolution" value="6.20 A"/>
    <property type="chains" value="m=1-124"/>
</dbReference>
<dbReference type="PDB" id="7EG8">
    <property type="method" value="EM"/>
    <property type="resolution" value="7.40 A"/>
    <property type="chains" value="m=1-124"/>
</dbReference>
<dbReference type="PDB" id="7EG9">
    <property type="method" value="EM"/>
    <property type="resolution" value="3.70 A"/>
    <property type="chains" value="m=1-124"/>
</dbReference>
<dbReference type="PDB" id="7EGA">
    <property type="method" value="EM"/>
    <property type="resolution" value="4.10 A"/>
    <property type="chains" value="m=1-124"/>
</dbReference>
<dbReference type="PDB" id="7EGB">
    <property type="method" value="EM"/>
    <property type="resolution" value="3.30 A"/>
    <property type="chains" value="m=1-124"/>
</dbReference>
<dbReference type="PDB" id="7EGC">
    <property type="method" value="EM"/>
    <property type="resolution" value="3.90 A"/>
    <property type="chains" value="m=1-124"/>
</dbReference>
<dbReference type="PDB" id="7EGD">
    <property type="method" value="EM"/>
    <property type="resolution" value="6.75 A"/>
    <property type="chains" value="m=1-124"/>
</dbReference>
<dbReference type="PDB" id="7EGE">
    <property type="method" value="EM"/>
    <property type="resolution" value="9.00 A"/>
    <property type="chains" value="m=1-124"/>
</dbReference>
<dbReference type="PDB" id="7EGF">
    <property type="method" value="EM"/>
    <property type="resolution" value="3.16 A"/>
    <property type="chains" value="m=1-124"/>
</dbReference>
<dbReference type="PDB" id="7EGI">
    <property type="method" value="EM"/>
    <property type="resolution" value="9.82 A"/>
    <property type="chains" value="m=1-124"/>
</dbReference>
<dbReference type="PDB" id="7EGJ">
    <property type="method" value="EM"/>
    <property type="resolution" value="8.64 A"/>
    <property type="chains" value="m=1-124"/>
</dbReference>
<dbReference type="PDB" id="7ENA">
    <property type="method" value="EM"/>
    <property type="resolution" value="4.07 A"/>
    <property type="chains" value="Dm=1-124"/>
</dbReference>
<dbReference type="PDB" id="7ENC">
    <property type="method" value="EM"/>
    <property type="resolution" value="4.13 A"/>
    <property type="chains" value="Dm=1-124"/>
</dbReference>
<dbReference type="PDB" id="8GXQ">
    <property type="method" value="EM"/>
    <property type="resolution" value="5.04 A"/>
    <property type="chains" value="Dm=1-124"/>
</dbReference>
<dbReference type="PDB" id="8GXS">
    <property type="method" value="EM"/>
    <property type="resolution" value="4.16 A"/>
    <property type="chains" value="Dm=1-124"/>
</dbReference>
<dbReference type="PDB" id="8WAK">
    <property type="method" value="EM"/>
    <property type="resolution" value="5.47 A"/>
    <property type="chains" value="m=1-124"/>
</dbReference>
<dbReference type="PDB" id="8WAL">
    <property type="method" value="EM"/>
    <property type="resolution" value="8.52 A"/>
    <property type="chains" value="m=1-124"/>
</dbReference>
<dbReference type="PDB" id="8WAN">
    <property type="method" value="EM"/>
    <property type="resolution" value="6.07 A"/>
    <property type="chains" value="m=1-124"/>
</dbReference>
<dbReference type="PDB" id="8WAO">
    <property type="method" value="EM"/>
    <property type="resolution" value="6.40 A"/>
    <property type="chains" value="m=1-124"/>
</dbReference>
<dbReference type="PDB" id="8WAP">
    <property type="method" value="EM"/>
    <property type="resolution" value="5.85 A"/>
    <property type="chains" value="m=1-124"/>
</dbReference>
<dbReference type="PDB" id="8WAQ">
    <property type="method" value="EM"/>
    <property type="resolution" value="6.29 A"/>
    <property type="chains" value="m=1-124"/>
</dbReference>
<dbReference type="PDB" id="8WAR">
    <property type="method" value="EM"/>
    <property type="resolution" value="7.20 A"/>
    <property type="chains" value="m=1-124"/>
</dbReference>
<dbReference type="PDB" id="8WAS">
    <property type="method" value="EM"/>
    <property type="resolution" value="6.13 A"/>
    <property type="chains" value="m=1-124"/>
</dbReference>
<dbReference type="PDBsum" id="1BH8"/>
<dbReference type="PDBsum" id="1BH9"/>
<dbReference type="PDBsum" id="6MZD"/>
<dbReference type="PDBsum" id="6MZL"/>
<dbReference type="PDBsum" id="7EDX"/>
<dbReference type="PDBsum" id="7EG7"/>
<dbReference type="PDBsum" id="7EG8"/>
<dbReference type="PDBsum" id="7EG9"/>
<dbReference type="PDBsum" id="7EGA"/>
<dbReference type="PDBsum" id="7EGB"/>
<dbReference type="PDBsum" id="7EGC"/>
<dbReference type="PDBsum" id="7EGD"/>
<dbReference type="PDBsum" id="7EGE"/>
<dbReference type="PDBsum" id="7EGF"/>
<dbReference type="PDBsum" id="7EGI"/>
<dbReference type="PDBsum" id="7EGJ"/>
<dbReference type="PDBsum" id="7ENA"/>
<dbReference type="PDBsum" id="7ENC"/>
<dbReference type="PDBsum" id="8GXQ"/>
<dbReference type="PDBsum" id="8GXS"/>
<dbReference type="PDBsum" id="8WAK"/>
<dbReference type="PDBsum" id="8WAL"/>
<dbReference type="PDBsum" id="8WAN"/>
<dbReference type="PDBsum" id="8WAO"/>
<dbReference type="PDBsum" id="8WAP"/>
<dbReference type="PDBsum" id="8WAQ"/>
<dbReference type="PDBsum" id="8WAR"/>
<dbReference type="PDBsum" id="8WAS"/>
<dbReference type="EMDB" id="EMD-31075"/>
<dbReference type="EMDB" id="EMD-31107"/>
<dbReference type="EMDB" id="EMD-31108"/>
<dbReference type="EMDB" id="EMD-31109"/>
<dbReference type="EMDB" id="EMD-31110"/>
<dbReference type="EMDB" id="EMD-31111"/>
<dbReference type="EMDB" id="EMD-31112"/>
<dbReference type="EMDB" id="EMD-31113"/>
<dbReference type="EMDB" id="EMD-31114"/>
<dbReference type="EMDB" id="EMD-31115"/>
<dbReference type="EMDB" id="EMD-31118"/>
<dbReference type="EMDB" id="EMD-31119"/>
<dbReference type="EMDB" id="EMD-31204"/>
<dbReference type="EMDB" id="EMD-31207"/>
<dbReference type="EMDB" id="EMD-34359"/>
<dbReference type="EMDB" id="EMD-34360"/>
<dbReference type="EMDB" id="EMD-37395"/>
<dbReference type="EMDB" id="EMD-37396"/>
<dbReference type="EMDB" id="EMD-37398"/>
<dbReference type="EMDB" id="EMD-37399"/>
<dbReference type="EMDB" id="EMD-37400"/>
<dbReference type="EMDB" id="EMD-37401"/>
<dbReference type="EMDB" id="EMD-37402"/>
<dbReference type="EMDB" id="EMD-37403"/>
<dbReference type="EMDB" id="EMD-9302"/>
<dbReference type="EMDB" id="EMD-9305"/>
<dbReference type="SMR" id="Q15543"/>
<dbReference type="BioGRID" id="112747">
    <property type="interactions" value="33"/>
</dbReference>
<dbReference type="ComplexPortal" id="CPX-915">
    <property type="entry name" value="General transcription factor complex TFIID"/>
</dbReference>
<dbReference type="ComplexPortal" id="CPX-930">
    <property type="entry name" value="General transcription factor complex TFIID, TAF4B variant"/>
</dbReference>
<dbReference type="CORUM" id="Q15543"/>
<dbReference type="DIP" id="DIP-900N"/>
<dbReference type="FunCoup" id="Q15543">
    <property type="interactions" value="2050"/>
</dbReference>
<dbReference type="IntAct" id="Q15543">
    <property type="interactions" value="14"/>
</dbReference>
<dbReference type="STRING" id="9606.ENSP00000355051"/>
<dbReference type="iPTMnet" id="Q15543"/>
<dbReference type="PhosphoSitePlus" id="Q15543"/>
<dbReference type="BioMuta" id="TAF13"/>
<dbReference type="DMDM" id="3024706"/>
<dbReference type="jPOST" id="Q15543"/>
<dbReference type="MassIVE" id="Q15543"/>
<dbReference type="PaxDb" id="9606-ENSP00000355051"/>
<dbReference type="PeptideAtlas" id="Q15543"/>
<dbReference type="ProteomicsDB" id="60625"/>
<dbReference type="Pumba" id="Q15543"/>
<dbReference type="Antibodypedia" id="33744">
    <property type="antibodies" value="155 antibodies from 23 providers"/>
</dbReference>
<dbReference type="DNASU" id="6884"/>
<dbReference type="Ensembl" id="ENST00000338366.6">
    <property type="protein sequence ID" value="ENSP00000355051.4"/>
    <property type="gene ID" value="ENSG00000197780.11"/>
</dbReference>
<dbReference type="GeneID" id="6884"/>
<dbReference type="KEGG" id="hsa:6884"/>
<dbReference type="MANE-Select" id="ENST00000338366.6">
    <property type="protein sequence ID" value="ENSP00000355051.4"/>
    <property type="RefSeq nucleotide sequence ID" value="NM_005645.4"/>
    <property type="RefSeq protein sequence ID" value="NP_005636.1"/>
</dbReference>
<dbReference type="UCSC" id="uc001dwm.2">
    <property type="organism name" value="human"/>
</dbReference>
<dbReference type="AGR" id="HGNC:11546"/>
<dbReference type="CTD" id="6884"/>
<dbReference type="DisGeNET" id="6884"/>
<dbReference type="GeneCards" id="TAF13"/>
<dbReference type="HGNC" id="HGNC:11546">
    <property type="gene designation" value="TAF13"/>
</dbReference>
<dbReference type="HPA" id="ENSG00000197780">
    <property type="expression patterns" value="Low tissue specificity"/>
</dbReference>
<dbReference type="MalaCards" id="TAF13"/>
<dbReference type="MIM" id="600774">
    <property type="type" value="gene"/>
</dbReference>
<dbReference type="MIM" id="617432">
    <property type="type" value="phenotype"/>
</dbReference>
<dbReference type="neXtProt" id="NX_Q15543"/>
<dbReference type="OpenTargets" id="ENSG00000197780"/>
<dbReference type="Orphanet" id="2512">
    <property type="disease" value="Autosomal recessive primary microcephaly"/>
</dbReference>
<dbReference type="PharmGKB" id="PA36321"/>
<dbReference type="VEuPathDB" id="HostDB:ENSG00000197780"/>
<dbReference type="eggNOG" id="KOG3901">
    <property type="taxonomic scope" value="Eukaryota"/>
</dbReference>
<dbReference type="GeneTree" id="ENSGT00390000012981"/>
<dbReference type="HOGENOM" id="CLU_076665_4_0_1"/>
<dbReference type="InParanoid" id="Q15543"/>
<dbReference type="OMA" id="CERAMNV"/>
<dbReference type="OrthoDB" id="10266074at2759"/>
<dbReference type="PAN-GO" id="Q15543">
    <property type="GO annotations" value="2 GO annotations based on evolutionary models"/>
</dbReference>
<dbReference type="PhylomeDB" id="Q15543"/>
<dbReference type="TreeFam" id="TF323609"/>
<dbReference type="PathwayCommons" id="Q15543"/>
<dbReference type="Reactome" id="R-HSA-167161">
    <property type="pathway name" value="HIV Transcription Initiation"/>
</dbReference>
<dbReference type="Reactome" id="R-HSA-167162">
    <property type="pathway name" value="RNA Polymerase II HIV Promoter Escape"/>
</dbReference>
<dbReference type="Reactome" id="R-HSA-167172">
    <property type="pathway name" value="Transcription of the HIV genome"/>
</dbReference>
<dbReference type="Reactome" id="R-HSA-674695">
    <property type="pathway name" value="RNA Polymerase II Pre-transcription Events"/>
</dbReference>
<dbReference type="Reactome" id="R-HSA-6804756">
    <property type="pathway name" value="Regulation of TP53 Activity through Phosphorylation"/>
</dbReference>
<dbReference type="Reactome" id="R-HSA-6807505">
    <property type="pathway name" value="RNA polymerase II transcribes snRNA genes"/>
</dbReference>
<dbReference type="Reactome" id="R-HSA-73776">
    <property type="pathway name" value="RNA Polymerase II Promoter Escape"/>
</dbReference>
<dbReference type="Reactome" id="R-HSA-73779">
    <property type="pathway name" value="RNA Polymerase II Transcription Pre-Initiation And Promoter Opening"/>
</dbReference>
<dbReference type="Reactome" id="R-HSA-75953">
    <property type="pathway name" value="RNA Polymerase II Transcription Initiation"/>
</dbReference>
<dbReference type="Reactome" id="R-HSA-76042">
    <property type="pathway name" value="RNA Polymerase II Transcription Initiation And Promoter Clearance"/>
</dbReference>
<dbReference type="SignaLink" id="Q15543"/>
<dbReference type="SIGNOR" id="Q15543"/>
<dbReference type="BioGRID-ORCS" id="6884">
    <property type="hits" value="300 hits in 1165 CRISPR screens"/>
</dbReference>
<dbReference type="ChiTaRS" id="TAF13">
    <property type="organism name" value="human"/>
</dbReference>
<dbReference type="EvolutionaryTrace" id="Q15543"/>
<dbReference type="GeneWiki" id="TAF13"/>
<dbReference type="GenomeRNAi" id="6884"/>
<dbReference type="Pharos" id="Q15543">
    <property type="development level" value="Tbio"/>
</dbReference>
<dbReference type="PRO" id="PR:Q15543"/>
<dbReference type="Proteomes" id="UP000005640">
    <property type="component" value="Chromosome 1"/>
</dbReference>
<dbReference type="RNAct" id="Q15543">
    <property type="molecule type" value="protein"/>
</dbReference>
<dbReference type="Bgee" id="ENSG00000197780">
    <property type="expression patterns" value="Expressed in medial globus pallidus and 190 other cell types or tissues"/>
</dbReference>
<dbReference type="ExpressionAtlas" id="Q15543">
    <property type="expression patterns" value="baseline and differential"/>
</dbReference>
<dbReference type="GO" id="GO:0005730">
    <property type="term" value="C:nucleolus"/>
    <property type="evidence" value="ECO:0000314"/>
    <property type="project" value="HPA"/>
</dbReference>
<dbReference type="GO" id="GO:0005654">
    <property type="term" value="C:nucleoplasm"/>
    <property type="evidence" value="ECO:0000314"/>
    <property type="project" value="HPA"/>
</dbReference>
<dbReference type="GO" id="GO:0005634">
    <property type="term" value="C:nucleus"/>
    <property type="evidence" value="ECO:0000269"/>
    <property type="project" value="ComplexPortal"/>
</dbReference>
<dbReference type="GO" id="GO:0005669">
    <property type="term" value="C:transcription factor TFIID complex"/>
    <property type="evidence" value="ECO:0000314"/>
    <property type="project" value="UniProtKB"/>
</dbReference>
<dbReference type="GO" id="GO:0003677">
    <property type="term" value="F:DNA binding"/>
    <property type="evidence" value="ECO:0007669"/>
    <property type="project" value="Ensembl"/>
</dbReference>
<dbReference type="GO" id="GO:0046982">
    <property type="term" value="F:protein heterodimerization activity"/>
    <property type="evidence" value="ECO:0007669"/>
    <property type="project" value="InterPro"/>
</dbReference>
<dbReference type="GO" id="GO:0016251">
    <property type="term" value="F:RNA polymerase II general transcription initiation factor activity"/>
    <property type="evidence" value="ECO:0000305"/>
    <property type="project" value="ARUK-UCL"/>
</dbReference>
<dbReference type="GO" id="GO:0017025">
    <property type="term" value="F:TBP-class protein binding"/>
    <property type="evidence" value="ECO:0000353"/>
    <property type="project" value="ARUK-UCL"/>
</dbReference>
<dbReference type="GO" id="GO:0006352">
    <property type="term" value="P:DNA-templated transcription initiation"/>
    <property type="evidence" value="ECO:0000303"/>
    <property type="project" value="UniProtKB"/>
</dbReference>
<dbReference type="GO" id="GO:0042789">
    <property type="term" value="P:mRNA transcription by RNA polymerase II"/>
    <property type="evidence" value="ECO:0000314"/>
    <property type="project" value="ComplexPortal"/>
</dbReference>
<dbReference type="GO" id="GO:0060261">
    <property type="term" value="P:positive regulation of transcription initiation by RNA polymerase II"/>
    <property type="evidence" value="ECO:0000314"/>
    <property type="project" value="ComplexPortal"/>
</dbReference>
<dbReference type="GO" id="GO:0051123">
    <property type="term" value="P:RNA polymerase II preinitiation complex assembly"/>
    <property type="evidence" value="ECO:0000353"/>
    <property type="project" value="ComplexPortal"/>
</dbReference>
<dbReference type="GO" id="GO:0006366">
    <property type="term" value="P:transcription by RNA polymerase II"/>
    <property type="evidence" value="ECO:0000318"/>
    <property type="project" value="GO_Central"/>
</dbReference>
<dbReference type="GO" id="GO:0006367">
    <property type="term" value="P:transcription initiation at RNA polymerase II promoter"/>
    <property type="evidence" value="ECO:0000305"/>
    <property type="project" value="UniProtKB"/>
</dbReference>
<dbReference type="CDD" id="cd07978">
    <property type="entry name" value="HFD_TAF13"/>
    <property type="match status" value="1"/>
</dbReference>
<dbReference type="FunFam" id="1.10.20.10:FF:000028">
    <property type="entry name" value="Transcription initiation factor TFIID subunit 13"/>
    <property type="match status" value="1"/>
</dbReference>
<dbReference type="Gene3D" id="1.10.20.10">
    <property type="entry name" value="Histone, subunit A"/>
    <property type="match status" value="1"/>
</dbReference>
<dbReference type="InterPro" id="IPR009072">
    <property type="entry name" value="Histone-fold"/>
</dbReference>
<dbReference type="InterPro" id="IPR003195">
    <property type="entry name" value="TFIID_TAF13"/>
</dbReference>
<dbReference type="PANTHER" id="PTHR11380:SF5">
    <property type="entry name" value="TRANSCRIPTION INITIATION FACTOR TFIID SUBUNIT 13"/>
    <property type="match status" value="1"/>
</dbReference>
<dbReference type="PANTHER" id="PTHR11380">
    <property type="entry name" value="TRANSCRIPTION INITIATION FACTOR TFIID/SUPT3-RELATED"/>
    <property type="match status" value="1"/>
</dbReference>
<dbReference type="Pfam" id="PF02269">
    <property type="entry name" value="TFIID-18kDa"/>
    <property type="match status" value="1"/>
</dbReference>
<dbReference type="SUPFAM" id="SSF47113">
    <property type="entry name" value="Histone-fold"/>
    <property type="match status" value="1"/>
</dbReference>
<evidence type="ECO:0000255" key="1"/>
<evidence type="ECO:0000256" key="2">
    <source>
        <dbReference type="SAM" id="MobiDB-lite"/>
    </source>
</evidence>
<evidence type="ECO:0000269" key="3">
    <source>
    </source>
</evidence>
<evidence type="ECO:0000269" key="4">
    <source>
    </source>
</evidence>
<evidence type="ECO:0000269" key="5">
    <source>
    </source>
</evidence>
<evidence type="ECO:0000303" key="6">
    <source>
    </source>
</evidence>
<evidence type="ECO:0000303" key="7">
    <source>
    </source>
</evidence>
<evidence type="ECO:0000305" key="8"/>
<evidence type="ECO:0000312" key="9">
    <source>
        <dbReference type="HGNC" id="HGNC:11546"/>
    </source>
</evidence>
<evidence type="ECO:0007744" key="10">
    <source>
        <dbReference type="PDB" id="7EDX"/>
    </source>
</evidence>
<evidence type="ECO:0007744" key="11">
    <source>
        <dbReference type="PDB" id="7EG7"/>
    </source>
</evidence>
<evidence type="ECO:0007744" key="12">
    <source>
        <dbReference type="PDB" id="7EG8"/>
    </source>
</evidence>
<evidence type="ECO:0007744" key="13">
    <source>
        <dbReference type="PDB" id="7EG9"/>
    </source>
</evidence>
<evidence type="ECO:0007744" key="14">
    <source>
        <dbReference type="PDB" id="7EGA"/>
    </source>
</evidence>
<evidence type="ECO:0007744" key="15">
    <source>
        <dbReference type="PDB" id="7EGB"/>
    </source>
</evidence>
<evidence type="ECO:0007744" key="16">
    <source>
        <dbReference type="PDB" id="7EGC"/>
    </source>
</evidence>
<evidence type="ECO:0007744" key="17">
    <source>
        <dbReference type="PDB" id="7EGD"/>
    </source>
</evidence>
<evidence type="ECO:0007744" key="18">
    <source>
        <dbReference type="PDB" id="7EGE"/>
    </source>
</evidence>
<evidence type="ECO:0007744" key="19">
    <source>
        <dbReference type="PDB" id="7EGF"/>
    </source>
</evidence>
<evidence type="ECO:0007829" key="20">
    <source>
        <dbReference type="PDB" id="1BH9"/>
    </source>
</evidence>
<evidence type="ECO:0007829" key="21">
    <source>
        <dbReference type="PDB" id="7EGF"/>
    </source>
</evidence>
<comment type="function">
    <text evidence="4 5">The TFIID basal transcription factor complex plays a major role in the initiation of RNA polymerase II (Pol II)-dependent transcription (PubMed:33795473, PubMed:9695952). TFIID recognizes and binds promoters via its subunit TBP, a TATA-box-binding protein, and promotes assembly of the pre-initiation complex (PIC) (PubMed:33795473). The TFIID complex consists of TBP and TBP-associated factors (TAFs), including TAF1, TAF2, TAF3, TAF4, TAF5, TAF6, TAF7, TAF8, TAF9, TAF10, TAF11, TAF12 and TAF13 (PubMed:33795473). TAF13, together with TAF11 and TBP, play key roles during promoter binding by the TFIID and TFIIA transcription factor complexes (PubMed:33795473).</text>
</comment>
<comment type="subunit">
    <text evidence="4 5">Component of the TFIID basal transcription factor complex, composed of TATA-box-binding protein TBP, and a number of TBP-associated factors (TAFs), including TAF1, TAF2, TAF3, TAF4, TAF5, TAF6, TAF7, TAF8, TAF9, TAF10, TAF11, TAF12 and TAF13 (PubMed:33795473). Interacts with TBP, and more strongly with TAF10 and TAF11 (PubMed:9695952).</text>
</comment>
<comment type="interaction">
    <interactant intactId="EBI-1026992">
        <id>Q15543</id>
    </interactant>
    <interactant intactId="EBI-742948">
        <id>Q5JR59</id>
        <label>MTUS2</label>
    </interactant>
    <organismsDiffer>false</organismsDiffer>
    <experiments>3</experiments>
</comment>
<comment type="interaction">
    <interactant intactId="EBI-1026992">
        <id>Q15543</id>
    </interactant>
    <interactant intactId="EBI-11522433">
        <id>Q5JR59-3</id>
        <label>MTUS2</label>
    </interactant>
    <organismsDiffer>false</organismsDiffer>
    <experiments>4</experiments>
</comment>
<comment type="interaction">
    <interactant intactId="EBI-1026992">
        <id>Q15543</id>
    </interactant>
    <interactant intactId="EBI-1027005">
        <id>Q15544</id>
        <label>TAF11</label>
    </interactant>
    <organismsDiffer>false</organismsDiffer>
    <experiments>2</experiments>
</comment>
<comment type="subcellular location">
    <subcellularLocation>
        <location evidence="5">Nucleus</location>
    </subcellularLocation>
</comment>
<comment type="domain">
    <text evidence="5">The binding of TAF10 and TAF11 requires distinct domains of TAF13.</text>
</comment>
<comment type="disease" evidence="3">
    <disease id="DI-04989">
        <name>Intellectual developmental disorder, autosomal recessive 60</name>
        <acronym>MRT60</acronym>
        <description>A disorder characterized by significantly below average general intellectual functioning associated with impairments in adaptive behavior and manifested during the developmental period. MRT60 patients display mild intellectual disability, delayed psychomotor development, learning difficulties, and poor overall growth with variable microcephaly.</description>
        <dbReference type="MIM" id="617432"/>
    </disease>
    <text>The disease is caused by variants affecting the gene represented in this entry.</text>
</comment>
<comment type="similarity">
    <text evidence="8">Belongs to the TAF13 family.</text>
</comment>
<protein>
    <recommendedName>
        <fullName evidence="8">Transcription initiation factor TFIID subunit 13</fullName>
    </recommendedName>
    <alternativeName>
        <fullName evidence="6">Transcription initiation factor TFIID 18 kDa subunit</fullName>
        <shortName evidence="7">TAF(II)18</shortName>
        <shortName evidence="8">TAFII-18</shortName>
        <shortName evidence="6">TAFII18</shortName>
    </alternativeName>
</protein>
<proteinExistence type="evidence at protein level"/>
<accession>Q15543</accession>
<accession>B2R5E5</accession>
<accession>Q5TYV6</accession>
<reference key="1">
    <citation type="journal article" date="1995" name="EMBO J.">
        <title>Cloning and characterization of hTAFII18, hTAFII20 and hTAFII28: three subunits of the human transcription factor TFIID.</title>
        <authorList>
            <person name="Mengus G."/>
            <person name="May M."/>
            <person name="Jacq X."/>
            <person name="Staub A."/>
            <person name="Tora L."/>
            <person name="Chambon P."/>
            <person name="Davidson I."/>
        </authorList>
    </citation>
    <scope>NUCLEOTIDE SEQUENCE [MRNA]</scope>
</reference>
<reference key="2">
    <citation type="journal article" date="2004" name="Nat. Genet.">
        <title>Complete sequencing and characterization of 21,243 full-length human cDNAs.</title>
        <authorList>
            <person name="Ota T."/>
            <person name="Suzuki Y."/>
            <person name="Nishikawa T."/>
            <person name="Otsuki T."/>
            <person name="Sugiyama T."/>
            <person name="Irie R."/>
            <person name="Wakamatsu A."/>
            <person name="Hayashi K."/>
            <person name="Sato H."/>
            <person name="Nagai K."/>
            <person name="Kimura K."/>
            <person name="Makita H."/>
            <person name="Sekine M."/>
            <person name="Obayashi M."/>
            <person name="Nishi T."/>
            <person name="Shibahara T."/>
            <person name="Tanaka T."/>
            <person name="Ishii S."/>
            <person name="Yamamoto J."/>
            <person name="Saito K."/>
            <person name="Kawai Y."/>
            <person name="Isono Y."/>
            <person name="Nakamura Y."/>
            <person name="Nagahari K."/>
            <person name="Murakami K."/>
            <person name="Yasuda T."/>
            <person name="Iwayanagi T."/>
            <person name="Wagatsuma M."/>
            <person name="Shiratori A."/>
            <person name="Sudo H."/>
            <person name="Hosoiri T."/>
            <person name="Kaku Y."/>
            <person name="Kodaira H."/>
            <person name="Kondo H."/>
            <person name="Sugawara M."/>
            <person name="Takahashi M."/>
            <person name="Kanda K."/>
            <person name="Yokoi T."/>
            <person name="Furuya T."/>
            <person name="Kikkawa E."/>
            <person name="Omura Y."/>
            <person name="Abe K."/>
            <person name="Kamihara K."/>
            <person name="Katsuta N."/>
            <person name="Sato K."/>
            <person name="Tanikawa M."/>
            <person name="Yamazaki M."/>
            <person name="Ninomiya K."/>
            <person name="Ishibashi T."/>
            <person name="Yamashita H."/>
            <person name="Murakawa K."/>
            <person name="Fujimori K."/>
            <person name="Tanai H."/>
            <person name="Kimata M."/>
            <person name="Watanabe M."/>
            <person name="Hiraoka S."/>
            <person name="Chiba Y."/>
            <person name="Ishida S."/>
            <person name="Ono Y."/>
            <person name="Takiguchi S."/>
            <person name="Watanabe S."/>
            <person name="Yosida M."/>
            <person name="Hotuta T."/>
            <person name="Kusano J."/>
            <person name="Kanehori K."/>
            <person name="Takahashi-Fujii A."/>
            <person name="Hara H."/>
            <person name="Tanase T.-O."/>
            <person name="Nomura Y."/>
            <person name="Togiya S."/>
            <person name="Komai F."/>
            <person name="Hara R."/>
            <person name="Takeuchi K."/>
            <person name="Arita M."/>
            <person name="Imose N."/>
            <person name="Musashino K."/>
            <person name="Yuuki H."/>
            <person name="Oshima A."/>
            <person name="Sasaki N."/>
            <person name="Aotsuka S."/>
            <person name="Yoshikawa Y."/>
            <person name="Matsunawa H."/>
            <person name="Ichihara T."/>
            <person name="Shiohata N."/>
            <person name="Sano S."/>
            <person name="Moriya S."/>
            <person name="Momiyama H."/>
            <person name="Satoh N."/>
            <person name="Takami S."/>
            <person name="Terashima Y."/>
            <person name="Suzuki O."/>
            <person name="Nakagawa S."/>
            <person name="Senoh A."/>
            <person name="Mizoguchi H."/>
            <person name="Goto Y."/>
            <person name="Shimizu F."/>
            <person name="Wakebe H."/>
            <person name="Hishigaki H."/>
            <person name="Watanabe T."/>
            <person name="Sugiyama A."/>
            <person name="Takemoto M."/>
            <person name="Kawakami B."/>
            <person name="Yamazaki M."/>
            <person name="Watanabe K."/>
            <person name="Kumagai A."/>
            <person name="Itakura S."/>
            <person name="Fukuzumi Y."/>
            <person name="Fujimori Y."/>
            <person name="Komiyama M."/>
            <person name="Tashiro H."/>
            <person name="Tanigami A."/>
            <person name="Fujiwara T."/>
            <person name="Ono T."/>
            <person name="Yamada K."/>
            <person name="Fujii Y."/>
            <person name="Ozaki K."/>
            <person name="Hirao M."/>
            <person name="Ohmori Y."/>
            <person name="Kawabata A."/>
            <person name="Hikiji T."/>
            <person name="Kobatake N."/>
            <person name="Inagaki H."/>
            <person name="Ikema Y."/>
            <person name="Okamoto S."/>
            <person name="Okitani R."/>
            <person name="Kawakami T."/>
            <person name="Noguchi S."/>
            <person name="Itoh T."/>
            <person name="Shigeta K."/>
            <person name="Senba T."/>
            <person name="Matsumura K."/>
            <person name="Nakajima Y."/>
            <person name="Mizuno T."/>
            <person name="Morinaga M."/>
            <person name="Sasaki M."/>
            <person name="Togashi T."/>
            <person name="Oyama M."/>
            <person name="Hata H."/>
            <person name="Watanabe M."/>
            <person name="Komatsu T."/>
            <person name="Mizushima-Sugano J."/>
            <person name="Satoh T."/>
            <person name="Shirai Y."/>
            <person name="Takahashi Y."/>
            <person name="Nakagawa K."/>
            <person name="Okumura K."/>
            <person name="Nagase T."/>
            <person name="Nomura N."/>
            <person name="Kikuchi H."/>
            <person name="Masuho Y."/>
            <person name="Yamashita R."/>
            <person name="Nakai K."/>
            <person name="Yada T."/>
            <person name="Nakamura Y."/>
            <person name="Ohara O."/>
            <person name="Isogai T."/>
            <person name="Sugano S."/>
        </authorList>
    </citation>
    <scope>NUCLEOTIDE SEQUENCE [LARGE SCALE MRNA]</scope>
    <source>
        <tissue>Substantia nigra</tissue>
    </source>
</reference>
<reference key="3">
    <citation type="journal article" date="2006" name="Nature">
        <title>The DNA sequence and biological annotation of human chromosome 1.</title>
        <authorList>
            <person name="Gregory S.G."/>
            <person name="Barlow K.F."/>
            <person name="McLay K.E."/>
            <person name="Kaul R."/>
            <person name="Swarbreck D."/>
            <person name="Dunham A."/>
            <person name="Scott C.E."/>
            <person name="Howe K.L."/>
            <person name="Woodfine K."/>
            <person name="Spencer C.C.A."/>
            <person name="Jones M.C."/>
            <person name="Gillson C."/>
            <person name="Searle S."/>
            <person name="Zhou Y."/>
            <person name="Kokocinski F."/>
            <person name="McDonald L."/>
            <person name="Evans R."/>
            <person name="Phillips K."/>
            <person name="Atkinson A."/>
            <person name="Cooper R."/>
            <person name="Jones C."/>
            <person name="Hall R.E."/>
            <person name="Andrews T.D."/>
            <person name="Lloyd C."/>
            <person name="Ainscough R."/>
            <person name="Almeida J.P."/>
            <person name="Ambrose K.D."/>
            <person name="Anderson F."/>
            <person name="Andrew R.W."/>
            <person name="Ashwell R.I.S."/>
            <person name="Aubin K."/>
            <person name="Babbage A.K."/>
            <person name="Bagguley C.L."/>
            <person name="Bailey J."/>
            <person name="Beasley H."/>
            <person name="Bethel G."/>
            <person name="Bird C.P."/>
            <person name="Bray-Allen S."/>
            <person name="Brown J.Y."/>
            <person name="Brown A.J."/>
            <person name="Buckley D."/>
            <person name="Burton J."/>
            <person name="Bye J."/>
            <person name="Carder C."/>
            <person name="Chapman J.C."/>
            <person name="Clark S.Y."/>
            <person name="Clarke G."/>
            <person name="Clee C."/>
            <person name="Cobley V."/>
            <person name="Collier R.E."/>
            <person name="Corby N."/>
            <person name="Coville G.J."/>
            <person name="Davies J."/>
            <person name="Deadman R."/>
            <person name="Dunn M."/>
            <person name="Earthrowl M."/>
            <person name="Ellington A.G."/>
            <person name="Errington H."/>
            <person name="Frankish A."/>
            <person name="Frankland J."/>
            <person name="French L."/>
            <person name="Garner P."/>
            <person name="Garnett J."/>
            <person name="Gay L."/>
            <person name="Ghori M.R.J."/>
            <person name="Gibson R."/>
            <person name="Gilby L.M."/>
            <person name="Gillett W."/>
            <person name="Glithero R.J."/>
            <person name="Grafham D.V."/>
            <person name="Griffiths C."/>
            <person name="Griffiths-Jones S."/>
            <person name="Grocock R."/>
            <person name="Hammond S."/>
            <person name="Harrison E.S.I."/>
            <person name="Hart E."/>
            <person name="Haugen E."/>
            <person name="Heath P.D."/>
            <person name="Holmes S."/>
            <person name="Holt K."/>
            <person name="Howden P.J."/>
            <person name="Hunt A.R."/>
            <person name="Hunt S.E."/>
            <person name="Hunter G."/>
            <person name="Isherwood J."/>
            <person name="James R."/>
            <person name="Johnson C."/>
            <person name="Johnson D."/>
            <person name="Joy A."/>
            <person name="Kay M."/>
            <person name="Kershaw J.K."/>
            <person name="Kibukawa M."/>
            <person name="Kimberley A.M."/>
            <person name="King A."/>
            <person name="Knights A.J."/>
            <person name="Lad H."/>
            <person name="Laird G."/>
            <person name="Lawlor S."/>
            <person name="Leongamornlert D.A."/>
            <person name="Lloyd D.M."/>
            <person name="Loveland J."/>
            <person name="Lovell J."/>
            <person name="Lush M.J."/>
            <person name="Lyne R."/>
            <person name="Martin S."/>
            <person name="Mashreghi-Mohammadi M."/>
            <person name="Matthews L."/>
            <person name="Matthews N.S.W."/>
            <person name="McLaren S."/>
            <person name="Milne S."/>
            <person name="Mistry S."/>
            <person name="Moore M.J.F."/>
            <person name="Nickerson T."/>
            <person name="O'Dell C.N."/>
            <person name="Oliver K."/>
            <person name="Palmeiri A."/>
            <person name="Palmer S.A."/>
            <person name="Parker A."/>
            <person name="Patel D."/>
            <person name="Pearce A.V."/>
            <person name="Peck A.I."/>
            <person name="Pelan S."/>
            <person name="Phelps K."/>
            <person name="Phillimore B.J."/>
            <person name="Plumb R."/>
            <person name="Rajan J."/>
            <person name="Raymond C."/>
            <person name="Rouse G."/>
            <person name="Saenphimmachak C."/>
            <person name="Sehra H.K."/>
            <person name="Sheridan E."/>
            <person name="Shownkeen R."/>
            <person name="Sims S."/>
            <person name="Skuce C.D."/>
            <person name="Smith M."/>
            <person name="Steward C."/>
            <person name="Subramanian S."/>
            <person name="Sycamore N."/>
            <person name="Tracey A."/>
            <person name="Tromans A."/>
            <person name="Van Helmond Z."/>
            <person name="Wall M."/>
            <person name="Wallis J.M."/>
            <person name="White S."/>
            <person name="Whitehead S.L."/>
            <person name="Wilkinson J.E."/>
            <person name="Willey D.L."/>
            <person name="Williams H."/>
            <person name="Wilming L."/>
            <person name="Wray P.W."/>
            <person name="Wu Z."/>
            <person name="Coulson A."/>
            <person name="Vaudin M."/>
            <person name="Sulston J.E."/>
            <person name="Durbin R.M."/>
            <person name="Hubbard T."/>
            <person name="Wooster R."/>
            <person name="Dunham I."/>
            <person name="Carter N.P."/>
            <person name="McVean G."/>
            <person name="Ross M.T."/>
            <person name="Harrow J."/>
            <person name="Olson M.V."/>
            <person name="Beck S."/>
            <person name="Rogers J."/>
            <person name="Bentley D.R."/>
        </authorList>
    </citation>
    <scope>NUCLEOTIDE SEQUENCE [LARGE SCALE GENOMIC DNA]</scope>
</reference>
<reference key="4">
    <citation type="submission" date="2005-07" db="EMBL/GenBank/DDBJ databases">
        <authorList>
            <person name="Mural R.J."/>
            <person name="Istrail S."/>
            <person name="Sutton G.G."/>
            <person name="Florea L."/>
            <person name="Halpern A.L."/>
            <person name="Mobarry C.M."/>
            <person name="Lippert R."/>
            <person name="Walenz B."/>
            <person name="Shatkay H."/>
            <person name="Dew I."/>
            <person name="Miller J.R."/>
            <person name="Flanigan M.J."/>
            <person name="Edwards N.J."/>
            <person name="Bolanos R."/>
            <person name="Fasulo D."/>
            <person name="Halldorsson B.V."/>
            <person name="Hannenhalli S."/>
            <person name="Turner R."/>
            <person name="Yooseph S."/>
            <person name="Lu F."/>
            <person name="Nusskern D.R."/>
            <person name="Shue B.C."/>
            <person name="Zheng X.H."/>
            <person name="Zhong F."/>
            <person name="Delcher A.L."/>
            <person name="Huson D.H."/>
            <person name="Kravitz S.A."/>
            <person name="Mouchard L."/>
            <person name="Reinert K."/>
            <person name="Remington K.A."/>
            <person name="Clark A.G."/>
            <person name="Waterman M.S."/>
            <person name="Eichler E.E."/>
            <person name="Adams M.D."/>
            <person name="Hunkapiller M.W."/>
            <person name="Myers E.W."/>
            <person name="Venter J.C."/>
        </authorList>
    </citation>
    <scope>NUCLEOTIDE SEQUENCE [LARGE SCALE GENOMIC DNA]</scope>
</reference>
<reference key="5">
    <citation type="journal article" date="2004" name="Genome Res.">
        <title>The status, quality, and expansion of the NIH full-length cDNA project: the Mammalian Gene Collection (MGC).</title>
        <authorList>
            <consortium name="The MGC Project Team"/>
        </authorList>
    </citation>
    <scope>NUCLEOTIDE SEQUENCE [LARGE SCALE MRNA]</scope>
</reference>
<reference key="6">
    <citation type="journal article" date="2017" name="Am. J. Hum. Genet.">
        <title>Hypomorphic Pathogenic variants in TAF13 are associated with autosomal-recessive intellectual disability and microcephaly.</title>
        <authorList>
            <person name="Tawamie H."/>
            <person name="Martianov I."/>
            <person name="Wohlfahrt N."/>
            <person name="Buchert R."/>
            <person name="Mengus G."/>
            <person name="Uebe S."/>
            <person name="Janiri L."/>
            <person name="Hirsch F.W."/>
            <person name="Schumacher J."/>
            <person name="Ferrazzi F."/>
            <person name="Sticht H."/>
            <person name="Reis A."/>
            <person name="Davidson I."/>
            <person name="Colombo R."/>
            <person name="Abou Jamra R."/>
        </authorList>
    </citation>
    <scope>INVOLVEMENT IN MRT60</scope>
    <scope>VARIANTS MRT60 HIS-31 AND LYS-40</scope>
    <scope>CHARACTERIZATION OF VARIANTS MRT60 HIS-31 AND LYS-40</scope>
</reference>
<reference key="7">
    <citation type="journal article" date="1998" name="Cell">
        <title>Human TAF(II)28 and TAF(II)18 interact through a histone fold encoded by atypical evolutionary conserved motifs also found in the SPT3 family.</title>
        <authorList>
            <person name="Birck C."/>
            <person name="Poch O."/>
            <person name="Romier C."/>
            <person name="Ruff M."/>
            <person name="Mengus G."/>
            <person name="Lavigne A.C."/>
            <person name="Davidson I."/>
            <person name="Moras D."/>
        </authorList>
    </citation>
    <scope>X-RAY CRYSTALLOGRAPHY (3.0 ANGSTROMS) OF 31-75 IN COMPLEX WITH TAF11</scope>
    <scope>DOMAIN</scope>
    <scope>FUNCTION</scope>
    <scope>SUBCELLULAR LOCATION</scope>
</reference>
<reference evidence="10 11 12 13 14 15 16 17 18 19" key="8">
    <citation type="journal article" date="2021" name="Science">
        <title>Structural insights into preinitiation complex assembly on core promoters.</title>
        <authorList>
            <person name="Chen X."/>
            <person name="Qi Y."/>
            <person name="Wu Z."/>
            <person name="Wang X."/>
            <person name="Li J."/>
            <person name="Zhao D."/>
            <person name="Hou H."/>
            <person name="Li Y."/>
            <person name="Yu Z."/>
            <person name="Liu W."/>
            <person name="Wang M."/>
            <person name="Ren Y."/>
            <person name="Li Z."/>
            <person name="Yang H."/>
            <person name="Xu Y."/>
        </authorList>
    </citation>
    <scope>STRUCTURE BY ELECTRON MICROSCOPY (3.16 ANGSTROMS)</scope>
    <scope>FUNCTION</scope>
    <scope>IDENTIFICATION IN THE TFIID COMPLEX</scope>
    <scope>SUBUNIT</scope>
</reference>
<name>TAF13_HUMAN</name>
<organism>
    <name type="scientific">Homo sapiens</name>
    <name type="common">Human</name>
    <dbReference type="NCBI Taxonomy" id="9606"/>
    <lineage>
        <taxon>Eukaryota</taxon>
        <taxon>Metazoa</taxon>
        <taxon>Chordata</taxon>
        <taxon>Craniata</taxon>
        <taxon>Vertebrata</taxon>
        <taxon>Euteleostomi</taxon>
        <taxon>Mammalia</taxon>
        <taxon>Eutheria</taxon>
        <taxon>Euarchontoglires</taxon>
        <taxon>Primates</taxon>
        <taxon>Haplorrhini</taxon>
        <taxon>Catarrhini</taxon>
        <taxon>Hominidae</taxon>
        <taxon>Homo</taxon>
    </lineage>
</organism>
<sequence>MADEEEDPTFEEENEEIGGGAEGGQGKRKRLFSKELRCMMYGFGDDQNPYTESVDILEDLVIEFITEMTHKAMSIGRQGRVQVEDIVFLIRKDPRKFARVKDLLTMNEELKRARKAFDEANYGS</sequence>